<gene>
    <name type="primary">STP2</name>
    <name type="ordered locus">YHR006W</name>
</gene>
<organism>
    <name type="scientific">Saccharomyces cerevisiae (strain ATCC 204508 / S288c)</name>
    <name type="common">Baker's yeast</name>
    <dbReference type="NCBI Taxonomy" id="559292"/>
    <lineage>
        <taxon>Eukaryota</taxon>
        <taxon>Fungi</taxon>
        <taxon>Dikarya</taxon>
        <taxon>Ascomycota</taxon>
        <taxon>Saccharomycotina</taxon>
        <taxon>Saccharomycetes</taxon>
        <taxon>Saccharomycetales</taxon>
        <taxon>Saccharomycetaceae</taxon>
        <taxon>Saccharomyces</taxon>
    </lineage>
</organism>
<dbReference type="EMBL" id="U10555">
    <property type="protein sequence ID" value="AAB68423.1"/>
    <property type="molecule type" value="Genomic_DNA"/>
</dbReference>
<dbReference type="EMBL" id="AY723821">
    <property type="protein sequence ID" value="AAU09738.1"/>
    <property type="molecule type" value="Genomic_DNA"/>
</dbReference>
<dbReference type="EMBL" id="BK006934">
    <property type="protein sequence ID" value="DAA06694.1"/>
    <property type="molecule type" value="Genomic_DNA"/>
</dbReference>
<dbReference type="PIR" id="S46794">
    <property type="entry name" value="S46794"/>
</dbReference>
<dbReference type="RefSeq" id="NP_011870.1">
    <property type="nucleotide sequence ID" value="NM_001179136.1"/>
</dbReference>
<dbReference type="BioGRID" id="36433">
    <property type="interactions" value="114"/>
</dbReference>
<dbReference type="FunCoup" id="P38704">
    <property type="interactions" value="772"/>
</dbReference>
<dbReference type="IntAct" id="P38704">
    <property type="interactions" value="6"/>
</dbReference>
<dbReference type="MINT" id="P38704"/>
<dbReference type="STRING" id="4932.YHR006W"/>
<dbReference type="iPTMnet" id="P38704"/>
<dbReference type="PaxDb" id="4932-YHR006W"/>
<dbReference type="PeptideAtlas" id="P38704"/>
<dbReference type="EnsemblFungi" id="YHR006W_mRNA">
    <property type="protein sequence ID" value="YHR006W"/>
    <property type="gene ID" value="YHR006W"/>
</dbReference>
<dbReference type="GeneID" id="856397"/>
<dbReference type="KEGG" id="sce:YHR006W"/>
<dbReference type="AGR" id="SGD:S000001048"/>
<dbReference type="SGD" id="S000001048">
    <property type="gene designation" value="STP2"/>
</dbReference>
<dbReference type="VEuPathDB" id="FungiDB:YHR006W"/>
<dbReference type="eggNOG" id="ENOG502S1NP">
    <property type="taxonomic scope" value="Eukaryota"/>
</dbReference>
<dbReference type="HOGENOM" id="CLU_025391_1_0_1"/>
<dbReference type="InParanoid" id="P38704"/>
<dbReference type="OMA" id="ESWVENH"/>
<dbReference type="OrthoDB" id="9439903at2759"/>
<dbReference type="BioCyc" id="YEAST:G3O-31071-MONOMER"/>
<dbReference type="BioGRID-ORCS" id="856397">
    <property type="hits" value="1 hit in 13 CRISPR screens"/>
</dbReference>
<dbReference type="PRO" id="PR:P38704"/>
<dbReference type="Proteomes" id="UP000002311">
    <property type="component" value="Chromosome VIII"/>
</dbReference>
<dbReference type="RNAct" id="P38704">
    <property type="molecule type" value="protein"/>
</dbReference>
<dbReference type="GO" id="GO:0005737">
    <property type="term" value="C:cytoplasm"/>
    <property type="evidence" value="ECO:0000314"/>
    <property type="project" value="SGD"/>
</dbReference>
<dbReference type="GO" id="GO:0005634">
    <property type="term" value="C:nucleus"/>
    <property type="evidence" value="ECO:0000314"/>
    <property type="project" value="SGD"/>
</dbReference>
<dbReference type="GO" id="GO:0005886">
    <property type="term" value="C:plasma membrane"/>
    <property type="evidence" value="ECO:0007669"/>
    <property type="project" value="UniProtKB-SubCell"/>
</dbReference>
<dbReference type="GO" id="GO:0001228">
    <property type="term" value="F:DNA-binding transcription activator activity, RNA polymerase II-specific"/>
    <property type="evidence" value="ECO:0000314"/>
    <property type="project" value="SGD"/>
</dbReference>
<dbReference type="GO" id="GO:0000981">
    <property type="term" value="F:DNA-binding transcription factor activity, RNA polymerase II-specific"/>
    <property type="evidence" value="ECO:0000318"/>
    <property type="project" value="GO_Central"/>
</dbReference>
<dbReference type="GO" id="GO:0000978">
    <property type="term" value="F:RNA polymerase II cis-regulatory region sequence-specific DNA binding"/>
    <property type="evidence" value="ECO:0000314"/>
    <property type="project" value="SGD"/>
</dbReference>
<dbReference type="GO" id="GO:0008270">
    <property type="term" value="F:zinc ion binding"/>
    <property type="evidence" value="ECO:0007669"/>
    <property type="project" value="UniProtKB-KW"/>
</dbReference>
<dbReference type="GO" id="GO:0045944">
    <property type="term" value="P:positive regulation of transcription by RNA polymerase II"/>
    <property type="evidence" value="ECO:0000315"/>
    <property type="project" value="SGD"/>
</dbReference>
<dbReference type="GO" id="GO:0006357">
    <property type="term" value="P:regulation of transcription by RNA polymerase II"/>
    <property type="evidence" value="ECO:0000318"/>
    <property type="project" value="GO_Central"/>
</dbReference>
<dbReference type="FunFam" id="3.30.160.60:FF:002862">
    <property type="entry name" value="STP2p Transcription factor"/>
    <property type="match status" value="1"/>
</dbReference>
<dbReference type="Gene3D" id="3.30.160.60">
    <property type="entry name" value="Classic Zinc Finger"/>
    <property type="match status" value="1"/>
</dbReference>
<dbReference type="InterPro" id="IPR051643">
    <property type="entry name" value="Transcr_Reg_ZincFinger"/>
</dbReference>
<dbReference type="InterPro" id="IPR036236">
    <property type="entry name" value="Znf_C2H2_sf"/>
</dbReference>
<dbReference type="InterPro" id="IPR013087">
    <property type="entry name" value="Znf_C2H2_type"/>
</dbReference>
<dbReference type="PANTHER" id="PTHR24396:SF19">
    <property type="entry name" value="FI01119P"/>
    <property type="match status" value="1"/>
</dbReference>
<dbReference type="PANTHER" id="PTHR24396">
    <property type="entry name" value="ZINC FINGER PROTEIN"/>
    <property type="match status" value="1"/>
</dbReference>
<dbReference type="Pfam" id="PF00096">
    <property type="entry name" value="zf-C2H2"/>
    <property type="match status" value="1"/>
</dbReference>
<dbReference type="SMART" id="SM00355">
    <property type="entry name" value="ZnF_C2H2"/>
    <property type="match status" value="2"/>
</dbReference>
<dbReference type="SUPFAM" id="SSF57667">
    <property type="entry name" value="beta-beta-alpha zinc fingers"/>
    <property type="match status" value="1"/>
</dbReference>
<dbReference type="PROSITE" id="PS00028">
    <property type="entry name" value="ZINC_FINGER_C2H2_1"/>
    <property type="match status" value="1"/>
</dbReference>
<dbReference type="PROSITE" id="PS50157">
    <property type="entry name" value="ZINC_FINGER_C2H2_2"/>
    <property type="match status" value="1"/>
</dbReference>
<reference key="1">
    <citation type="journal article" date="1994" name="Science">
        <title>Complete nucleotide sequence of Saccharomyces cerevisiae chromosome VIII.</title>
        <authorList>
            <person name="Johnston M."/>
            <person name="Andrews S."/>
            <person name="Brinkman R."/>
            <person name="Cooper J."/>
            <person name="Ding H."/>
            <person name="Dover J."/>
            <person name="Du Z."/>
            <person name="Favello A."/>
            <person name="Fulton L."/>
            <person name="Gattung S."/>
            <person name="Geisel C."/>
            <person name="Kirsten J."/>
            <person name="Kucaba T."/>
            <person name="Hillier L.W."/>
            <person name="Jier M."/>
            <person name="Johnston L."/>
            <person name="Langston Y."/>
            <person name="Latreille P."/>
            <person name="Louis E.J."/>
            <person name="Macri C."/>
            <person name="Mardis E."/>
            <person name="Menezes S."/>
            <person name="Mouser L."/>
            <person name="Nhan M."/>
            <person name="Rifkin L."/>
            <person name="Riles L."/>
            <person name="St Peter H."/>
            <person name="Trevaskis E."/>
            <person name="Vaughan K."/>
            <person name="Vignati D."/>
            <person name="Wilcox L."/>
            <person name="Wohldman P."/>
            <person name="Waterston R."/>
            <person name="Wilson R."/>
            <person name="Vaudin M."/>
        </authorList>
    </citation>
    <scope>NUCLEOTIDE SEQUENCE [LARGE SCALE GENOMIC DNA]</scope>
    <source>
        <strain>ATCC 204508 / S288c</strain>
    </source>
</reference>
<reference key="2">
    <citation type="journal article" date="2014" name="G3 (Bethesda)">
        <title>The reference genome sequence of Saccharomyces cerevisiae: Then and now.</title>
        <authorList>
            <person name="Engel S.R."/>
            <person name="Dietrich F.S."/>
            <person name="Fisk D.G."/>
            <person name="Binkley G."/>
            <person name="Balakrishnan R."/>
            <person name="Costanzo M.C."/>
            <person name="Dwight S.S."/>
            <person name="Hitz B.C."/>
            <person name="Karra K."/>
            <person name="Nash R.S."/>
            <person name="Weng S."/>
            <person name="Wong E.D."/>
            <person name="Lloyd P."/>
            <person name="Skrzypek M.S."/>
            <person name="Miyasato S.R."/>
            <person name="Simison M."/>
            <person name="Cherry J.M."/>
        </authorList>
    </citation>
    <scope>GENOME REANNOTATION</scope>
    <source>
        <strain>ATCC 204508 / S288c</strain>
    </source>
</reference>
<reference key="3">
    <citation type="journal article" date="2007" name="Genome Res.">
        <title>Approaching a complete repository of sequence-verified protein-encoding clones for Saccharomyces cerevisiae.</title>
        <authorList>
            <person name="Hu Y."/>
            <person name="Rolfs A."/>
            <person name="Bhullar B."/>
            <person name="Murthy T.V.S."/>
            <person name="Zhu C."/>
            <person name="Berger M.F."/>
            <person name="Camargo A.A."/>
            <person name="Kelley F."/>
            <person name="McCarron S."/>
            <person name="Jepson D."/>
            <person name="Richardson A."/>
            <person name="Raphael J."/>
            <person name="Moreira D."/>
            <person name="Taycher E."/>
            <person name="Zuo D."/>
            <person name="Mohr S."/>
            <person name="Kane M.F."/>
            <person name="Williamson J."/>
            <person name="Simpson A.J.G."/>
            <person name="Bulyk M.L."/>
            <person name="Harlow E."/>
            <person name="Marsischky G."/>
            <person name="Kolodner R.D."/>
            <person name="LaBaer J."/>
        </authorList>
    </citation>
    <scope>NUCLEOTIDE SEQUENCE [GENOMIC DNA]</scope>
    <source>
        <strain>ATCC 204508 / S288c</strain>
    </source>
</reference>
<reference key="4">
    <citation type="journal article" date="1997" name="Nucleic Acids Res.">
        <title>Variations of the C2H2 zinc finger motif in the yeast genome and classification of yeast zinc finger proteins.</title>
        <authorList>
            <person name="Boehm S."/>
            <person name="Frishman D."/>
            <person name="Mewes H.-W."/>
        </authorList>
    </citation>
    <scope>DOMAIN ATYPICAL ZINC-FINGER</scope>
</reference>
<reference key="5">
    <citation type="journal article" date="2000" name="Nucleic Acids Res.">
        <title>Stp1p, Stp2p and Abf1p are involved in regulation of expression of the amino acid transporter gene BAP3 of Saccharomyces cerevisiae.</title>
        <authorList>
            <person name="de Boer M."/>
            <person name="Nielsen P.S."/>
            <person name="Bebelman J.-P."/>
            <person name="Heerikhuizen H."/>
            <person name="Andersen H.A."/>
            <person name="Planta R.J."/>
        </authorList>
    </citation>
    <scope>FUNCTION IN TRANSCRIPTION REGULATION</scope>
</reference>
<reference key="6">
    <citation type="journal article" date="2001" name="Mol. Gen. Genet.">
        <title>Transcriptional regulation of the Saccharomyces cerevisiae amino acid permease gene BAP2.</title>
        <authorList>
            <person name="Nielsen P.S."/>
            <person name="van den Hazel B."/>
            <person name="Didion T."/>
            <person name="de Boer M."/>
            <person name="Joergensen M.U."/>
            <person name="Planta R.J."/>
            <person name="Kielland-Brandt M.C."/>
            <person name="Andersen H.A."/>
        </authorList>
    </citation>
    <scope>DNA-BINDING</scope>
</reference>
<reference key="7">
    <citation type="journal article" date="2002" name="Genes Dev.">
        <title>Receptor-mediated endoproteolytic activation of two transcription factors in yeast.</title>
        <authorList>
            <person name="Andreasson C."/>
            <person name="Ljungdahl P.O."/>
        </authorList>
    </citation>
    <scope>PROTEOLYTIC PROCESSING</scope>
    <scope>MUTAGENESIS OF 2-PRO--PHE-74</scope>
    <scope>SUBCELLULAR LOCATION</scope>
</reference>
<reference key="8">
    <citation type="journal article" date="2003" name="Nature">
        <title>Global analysis of protein localization in budding yeast.</title>
        <authorList>
            <person name="Huh W.-K."/>
            <person name="Falvo J.V."/>
            <person name="Gerke L.C."/>
            <person name="Carroll A.S."/>
            <person name="Howson R.W."/>
            <person name="Weissman J.S."/>
            <person name="O'Shea E.K."/>
        </authorList>
    </citation>
    <scope>SUBCELLULAR LOCATION [LARGE SCALE ANALYSIS]</scope>
</reference>
<reference key="9">
    <citation type="journal article" date="2003" name="Nature">
        <title>Global analysis of protein expression in yeast.</title>
        <authorList>
            <person name="Ghaemmaghami S."/>
            <person name="Huh W.-K."/>
            <person name="Bower K."/>
            <person name="Howson R.W."/>
            <person name="Belle A."/>
            <person name="Dephoure N."/>
            <person name="O'Shea E.K."/>
            <person name="Weissman J.S."/>
        </authorList>
    </citation>
    <scope>LEVEL OF PROTEIN EXPRESSION [LARGE SCALE ANALYSIS]</scope>
</reference>
<reference key="10">
    <citation type="journal article" date="2004" name="Mol. Cell. Biol.">
        <title>The N-terminal regulatory domain of Stp1p is modular and, fused to an artificial transcription factor, confers full Ssy1p-Ptr3p-Ssy5p sensor control.</title>
        <authorList>
            <person name="Andreasson C."/>
            <person name="Ljungdahl P.O."/>
        </authorList>
    </citation>
    <scope>DOMAIN</scope>
</reference>
<reference key="11">
    <citation type="journal article" date="2004" name="Yeast">
        <title>Transcriptional profiling of extracellular amino acid sensing in Saccharomyces cerevisiae and the role of Stp1p and Stp2p.</title>
        <authorList>
            <person name="Eckert-Boulet N."/>
            <person name="Nielsen P.S."/>
            <person name="Friis C."/>
            <person name="dos Santos M.M."/>
            <person name="Nielsen J."/>
            <person name="Kielland-Brandt M.C."/>
            <person name="Regenberg B."/>
        </authorList>
    </citation>
    <scope>FUNCTION</scope>
    <scope>SUBCELLULAR LOCATION</scope>
</reference>
<reference key="12">
    <citation type="journal article" date="2006" name="J. Cell Biol.">
        <title>Asi1 is an inner nuclear membrane protein that restricts promoter access of two latent transcription factors.</title>
        <authorList>
            <person name="Boban M."/>
            <person name="Zargari A."/>
            <person name="Andreasson C."/>
            <person name="Heessen S."/>
            <person name="Thyberg J."/>
            <person name="Ljungdahl P.O."/>
        </authorList>
    </citation>
    <scope>FUNCTION</scope>
    <scope>SUBCELLULAR LOCATION</scope>
</reference>
<reference key="13">
    <citation type="journal article" date="2007" name="J. Biol. Chem.">
        <title>Inner nuclear membrane proteins Asi1, Asi2, and Asi3 function in concert to maintain the latent properties of transcription factors Stp1 and Stp2.</title>
        <authorList>
            <person name="Zargari A."/>
            <person name="Boban M."/>
            <person name="Heessen S."/>
            <person name="Andreasson C."/>
            <person name="Thyberg J."/>
            <person name="Ljungdahl P.O."/>
        </authorList>
    </citation>
    <scope>FUNCTION</scope>
</reference>
<reference key="14">
    <citation type="journal article" date="2008" name="Mol. Cell. Proteomics">
        <title>A multidimensional chromatography technology for in-depth phosphoproteome analysis.</title>
        <authorList>
            <person name="Albuquerque C.P."/>
            <person name="Smolka M.B."/>
            <person name="Payne S.H."/>
            <person name="Bafna V."/>
            <person name="Eng J."/>
            <person name="Zhou H."/>
        </authorList>
    </citation>
    <scope>IDENTIFICATION BY MASS SPECTROMETRY [LARGE SCALE ANALYSIS]</scope>
</reference>
<evidence type="ECO:0000250" key="1"/>
<evidence type="ECO:0000255" key="2">
    <source>
        <dbReference type="PROSITE-ProRule" id="PRU00042"/>
    </source>
</evidence>
<evidence type="ECO:0000256" key="3">
    <source>
        <dbReference type="SAM" id="MobiDB-lite"/>
    </source>
</evidence>
<evidence type="ECO:0000269" key="4">
    <source>
    </source>
</evidence>
<evidence type="ECO:0000269" key="5">
    <source>
    </source>
</evidence>
<evidence type="ECO:0000269" key="6">
    <source>
    </source>
</evidence>
<evidence type="ECO:0000269" key="7">
    <source>
    </source>
</evidence>
<evidence type="ECO:0000269" key="8">
    <source>
    </source>
</evidence>
<evidence type="ECO:0000269" key="9">
    <source>
    </source>
</evidence>
<evidence type="ECO:0000269" key="10">
    <source>
    </source>
</evidence>
<evidence type="ECO:0000269" key="11">
    <source>
    </source>
</evidence>
<evidence type="ECO:0000269" key="12">
    <source>
    </source>
</evidence>
<evidence type="ECO:0000305" key="13"/>
<sequence length="541" mass="60792">MPILSLSSTRNSVLTRIYDYLKALVQQVIVPNVEDDKSSKSTPFEKLEPAKQNHPQKDCCATEKDDLVDVSELFPKQNNKQLSLTSKSSVVPCALNLDNLETPFSIKIDNNGAVTTQLNLDEPILRGPSRGEPAKLQNDLISSPPLEESYINNDQYKALFPSNFLPITPVSSVITPASKKSIDESPLSDEVQGIADESSETLPYICHYCDARFRIRGYLTRHIKKHAKRKAYHCPFFDNSISQELRCHTSGGFSRRDTYKTHLKSRHFTYPEGVKPQDRNKSPGVCTQCGEHFSTSESWVENHIEAGSCKGLPEGYSEGIREKKKTSKMKMIKTSDGQTRFISSDESVSEPALQNKNCIEATVMQSKERPNDKIIPTKTEKNDFGIGTQWFERKQISRPTQTTQSRGPTEVQNLKEWSIISPPILSPQNASSVPQEYQSSRYTLHMDSPALSSASSALSPLSGDPITTTETNKSYPLDSEQSLLEPDKTEEDAINQSKESNMISINEMLQKQMDFELLGENHLKETQDYLALYKKAYGIEF</sequence>
<protein>
    <recommendedName>
        <fullName>Transcription factor STP2</fullName>
    </recommendedName>
</protein>
<name>STP2_YEAST</name>
<keyword id="KW-1003">Cell membrane</keyword>
<keyword id="KW-0238">DNA-binding</keyword>
<keyword id="KW-0472">Membrane</keyword>
<keyword id="KW-0479">Metal-binding</keyword>
<keyword id="KW-0539">Nucleus</keyword>
<keyword id="KW-1185">Reference proteome</keyword>
<keyword id="KW-0677">Repeat</keyword>
<keyword id="KW-0862">Zinc</keyword>
<keyword id="KW-0863">Zinc-finger</keyword>
<keyword id="KW-0865">Zymogen</keyword>
<proteinExistence type="evidence at protein level"/>
<accession>P38704</accession>
<accession>D3DKV0</accession>
<accession>E9P956</accession>
<comment type="function">
    <text evidence="1 4 8 10 11">Transcription factor involved in the regulation of gene expression in response to extracellular amino acid levels. Synthesized as latent cytoplasmic precursor, which, upon a signal initiated by the plasma membrane SPS (SSY1-PTR3-SSY5) amino acid sensor system, becomes proteolytically activated and relocates to the nucleus, where it induces the expression of SPS-sensor-regulated genes, including the amino-acid permeases BAP2 and BAP3. Binding to promoters is facilitated by DAL81 (By similarity). Involved in the repression of genes subject to nitrogen catabolite repression and genes involved in stress response. Negatively regulated by inner nuclear membrane proteins ASI1, ASI2 and ASI3, which prevent unprocessed precursor forms that escape cytoplasmic anchoring from inducing SPS-sensor-regulated genes.</text>
</comment>
<comment type="subunit">
    <text>Interacts (via Region II) with SSY5; protease component of the SPS-sensor.</text>
</comment>
<comment type="subcellular location">
    <subcellularLocation>
        <location evidence="1">Cell membrane</location>
        <topology evidence="1">Peripheral membrane protein</topology>
        <orientation evidence="1">Cytoplasmic side</orientation>
    </subcellularLocation>
    <subcellularLocation>
        <location evidence="5 6 8 10">Nucleus</location>
    </subcellularLocation>
    <text>Localizes to the cytoplasm in its unprocessed form and is targeted to the nucleus after proteolytic processing upon induction by amino acids.</text>
</comment>
<comment type="domain">
    <text evidence="1 9 12">The N-terminal inhibitory domain contains conserved sequence elements important for cytoplasmic retention (Region I) and proteolytic processing (Region II) of the protein (By similarity). Region I is also required for ASI1/2/3-mediated negative regulation of transcription.</text>
</comment>
<comment type="PTM">
    <text evidence="1">Activated by the amino acid-induced proteolytic removal of an N-terminal inhibitory domain by serine protease SSY5, an intrinsic component of the SPS-sensor. Processing requires at least 2 components of the SCF(GRR1) ubiquitin ligase complex, namely the F-box protein GRR1 and the E2 enzyme CDC34, but does not depend on the proteasome. Processing is negatively regulated by the protein phosphatase 2A regulatory subunit RTS1 (By similarity).</text>
</comment>
<comment type="miscellaneous">
    <text evidence="7">Present with 6490 molecules/cell in log phase SD medium.</text>
</comment>
<feature type="propeptide" id="PRO_0000377649">
    <location>
        <begin position="1"/>
        <end status="unknown"/>
    </location>
</feature>
<feature type="chain" id="PRO_0000046854" description="Transcription factor STP2">
    <location>
        <begin status="unknown"/>
        <end position="541"/>
    </location>
</feature>
<feature type="zinc finger region" description="C2H2-type 1" evidence="2">
    <location>
        <begin position="204"/>
        <end position="226"/>
    </location>
</feature>
<feature type="zinc finger region" description="C2H2-type 2; atypical" evidence="2">
    <location>
        <begin position="232"/>
        <end position="267"/>
    </location>
</feature>
<feature type="zinc finger region" description="C2H2-type 3; atypical" evidence="2">
    <location>
        <begin position="284"/>
        <end position="309"/>
    </location>
</feature>
<feature type="region of interest" description="I">
    <location>
        <begin position="13"/>
        <end position="32"/>
    </location>
</feature>
<feature type="region of interest" description="Disordered" evidence="3">
    <location>
        <begin position="35"/>
        <end position="58"/>
    </location>
</feature>
<feature type="region of interest" description="II">
    <location>
        <begin position="73"/>
        <end position="105"/>
    </location>
</feature>
<feature type="region of interest" description="Disordered" evidence="3">
    <location>
        <begin position="452"/>
        <end position="497"/>
    </location>
</feature>
<feature type="compositionally biased region" description="Low complexity" evidence="3">
    <location>
        <begin position="452"/>
        <end position="462"/>
    </location>
</feature>
<feature type="compositionally biased region" description="Polar residues" evidence="3">
    <location>
        <begin position="465"/>
        <end position="482"/>
    </location>
</feature>
<feature type="mutagenesis site" description="Dominant active transcription factor." evidence="5">
    <location>
        <begin position="2"/>
        <end position="74"/>
    </location>
</feature>
<feature type="sequence conflict" description="In Ref. 3; AAU09738." evidence="13" ref="3">
    <original>E</original>
    <variation>G</variation>
    <location>
        <position position="101"/>
    </location>
</feature>